<reference key="1">
    <citation type="submission" date="2008-08" db="EMBL/GenBank/DDBJ databases">
        <title>Complete sequence of Vibrio fischeri strain MJ11.</title>
        <authorList>
            <person name="Mandel M.J."/>
            <person name="Stabb E.V."/>
            <person name="Ruby E.G."/>
            <person name="Ferriera S."/>
            <person name="Johnson J."/>
            <person name="Kravitz S."/>
            <person name="Beeson K."/>
            <person name="Sutton G."/>
            <person name="Rogers Y.-H."/>
            <person name="Friedman R."/>
            <person name="Frazier M."/>
            <person name="Venter J.C."/>
        </authorList>
    </citation>
    <scope>NUCLEOTIDE SEQUENCE [LARGE SCALE GENOMIC DNA]</scope>
    <source>
        <strain>MJ11</strain>
    </source>
</reference>
<feature type="chain" id="PRO_1000143190" description="Small ribosomal subunit protein uS15">
    <location>
        <begin position="1"/>
        <end position="89"/>
    </location>
</feature>
<keyword id="KW-0687">Ribonucleoprotein</keyword>
<keyword id="KW-0689">Ribosomal protein</keyword>
<keyword id="KW-0694">RNA-binding</keyword>
<keyword id="KW-0699">rRNA-binding</keyword>
<name>RS15_ALIFM</name>
<sequence>MSLNAETKAAIVAEYAQSEGDTGSPEVQVALLTASINHLQGHFANHKHDHHSRRGLLRMVSSRRKLLDYLKGKNLARYQDLIKRLGLRR</sequence>
<accession>B5FA82</accession>
<protein>
    <recommendedName>
        <fullName evidence="1">Small ribosomal subunit protein uS15</fullName>
    </recommendedName>
    <alternativeName>
        <fullName evidence="2">30S ribosomal protein S15</fullName>
    </alternativeName>
</protein>
<organism>
    <name type="scientific">Aliivibrio fischeri (strain MJ11)</name>
    <name type="common">Vibrio fischeri</name>
    <dbReference type="NCBI Taxonomy" id="388396"/>
    <lineage>
        <taxon>Bacteria</taxon>
        <taxon>Pseudomonadati</taxon>
        <taxon>Pseudomonadota</taxon>
        <taxon>Gammaproteobacteria</taxon>
        <taxon>Vibrionales</taxon>
        <taxon>Vibrionaceae</taxon>
        <taxon>Aliivibrio</taxon>
    </lineage>
</organism>
<evidence type="ECO:0000255" key="1">
    <source>
        <dbReference type="HAMAP-Rule" id="MF_01343"/>
    </source>
</evidence>
<evidence type="ECO:0000305" key="2"/>
<proteinExistence type="inferred from homology"/>
<dbReference type="EMBL" id="CP001139">
    <property type="protein sequence ID" value="ACH66574.1"/>
    <property type="molecule type" value="Genomic_DNA"/>
</dbReference>
<dbReference type="RefSeq" id="WP_005417682.1">
    <property type="nucleotide sequence ID" value="NC_011184.1"/>
</dbReference>
<dbReference type="SMR" id="B5FA82"/>
<dbReference type="GeneID" id="54163126"/>
<dbReference type="KEGG" id="vfm:VFMJ11_0490"/>
<dbReference type="HOGENOM" id="CLU_148518_0_0_6"/>
<dbReference type="Proteomes" id="UP000001857">
    <property type="component" value="Chromosome I"/>
</dbReference>
<dbReference type="GO" id="GO:0022627">
    <property type="term" value="C:cytosolic small ribosomal subunit"/>
    <property type="evidence" value="ECO:0007669"/>
    <property type="project" value="TreeGrafter"/>
</dbReference>
<dbReference type="GO" id="GO:0019843">
    <property type="term" value="F:rRNA binding"/>
    <property type="evidence" value="ECO:0007669"/>
    <property type="project" value="UniProtKB-UniRule"/>
</dbReference>
<dbReference type="GO" id="GO:0003735">
    <property type="term" value="F:structural constituent of ribosome"/>
    <property type="evidence" value="ECO:0007669"/>
    <property type="project" value="InterPro"/>
</dbReference>
<dbReference type="GO" id="GO:0006412">
    <property type="term" value="P:translation"/>
    <property type="evidence" value="ECO:0007669"/>
    <property type="project" value="UniProtKB-UniRule"/>
</dbReference>
<dbReference type="CDD" id="cd00353">
    <property type="entry name" value="Ribosomal_S15p_S13e"/>
    <property type="match status" value="1"/>
</dbReference>
<dbReference type="FunFam" id="1.10.287.10:FF:000002">
    <property type="entry name" value="30S ribosomal protein S15"/>
    <property type="match status" value="1"/>
</dbReference>
<dbReference type="Gene3D" id="6.10.250.3130">
    <property type="match status" value="1"/>
</dbReference>
<dbReference type="Gene3D" id="1.10.287.10">
    <property type="entry name" value="S15/NS1, RNA-binding"/>
    <property type="match status" value="1"/>
</dbReference>
<dbReference type="HAMAP" id="MF_01343_B">
    <property type="entry name" value="Ribosomal_uS15_B"/>
    <property type="match status" value="1"/>
</dbReference>
<dbReference type="InterPro" id="IPR000589">
    <property type="entry name" value="Ribosomal_uS15"/>
</dbReference>
<dbReference type="InterPro" id="IPR005290">
    <property type="entry name" value="Ribosomal_uS15_bac-type"/>
</dbReference>
<dbReference type="InterPro" id="IPR009068">
    <property type="entry name" value="uS15_NS1_RNA-bd_sf"/>
</dbReference>
<dbReference type="NCBIfam" id="TIGR00952">
    <property type="entry name" value="S15_bact"/>
    <property type="match status" value="1"/>
</dbReference>
<dbReference type="PANTHER" id="PTHR23321">
    <property type="entry name" value="RIBOSOMAL PROTEIN S15, BACTERIAL AND ORGANELLAR"/>
    <property type="match status" value="1"/>
</dbReference>
<dbReference type="PANTHER" id="PTHR23321:SF26">
    <property type="entry name" value="SMALL RIBOSOMAL SUBUNIT PROTEIN US15M"/>
    <property type="match status" value="1"/>
</dbReference>
<dbReference type="Pfam" id="PF00312">
    <property type="entry name" value="Ribosomal_S15"/>
    <property type="match status" value="1"/>
</dbReference>
<dbReference type="SMART" id="SM01387">
    <property type="entry name" value="Ribosomal_S15"/>
    <property type="match status" value="1"/>
</dbReference>
<dbReference type="SUPFAM" id="SSF47060">
    <property type="entry name" value="S15/NS1 RNA-binding domain"/>
    <property type="match status" value="1"/>
</dbReference>
<dbReference type="PROSITE" id="PS00362">
    <property type="entry name" value="RIBOSOMAL_S15"/>
    <property type="match status" value="1"/>
</dbReference>
<gene>
    <name evidence="1" type="primary">rpsO</name>
    <name type="ordered locus">VFMJ11_0490</name>
</gene>
<comment type="function">
    <text evidence="1">One of the primary rRNA binding proteins, it binds directly to 16S rRNA where it helps nucleate assembly of the platform of the 30S subunit by binding and bridging several RNA helices of the 16S rRNA.</text>
</comment>
<comment type="function">
    <text evidence="1">Forms an intersubunit bridge (bridge B4) with the 23S rRNA of the 50S subunit in the ribosome.</text>
</comment>
<comment type="subunit">
    <text evidence="1">Part of the 30S ribosomal subunit. Forms a bridge to the 50S subunit in the 70S ribosome, contacting the 23S rRNA.</text>
</comment>
<comment type="similarity">
    <text evidence="1">Belongs to the universal ribosomal protein uS15 family.</text>
</comment>